<keyword id="KW-0007">Acetylation</keyword>
<keyword id="KW-0202">Cytokine</keyword>
<keyword id="KW-0963">Cytoplasm</keyword>
<keyword id="KW-0903">Direct protein sequencing</keyword>
<keyword id="KW-0391">Immunity</keyword>
<keyword id="KW-0395">Inflammatory response</keyword>
<keyword id="KW-0399">Innate immunity</keyword>
<keyword id="KW-0413">Isomerase</keyword>
<keyword id="KW-1185">Reference proteome</keyword>
<keyword id="KW-0964">Secreted</keyword>
<proteinExistence type="evidence at protein level"/>
<dbReference type="EC" id="5.3.2.1" evidence="1"/>
<dbReference type="EC" id="5.3.3.12" evidence="1"/>
<dbReference type="EMBL" id="BC102066">
    <property type="protein sequence ID" value="AAI02067.1"/>
    <property type="molecule type" value="mRNA"/>
</dbReference>
<dbReference type="EMBL" id="AF119571">
    <property type="protein sequence ID" value="AAD38354.1"/>
    <property type="molecule type" value="mRNA"/>
</dbReference>
<dbReference type="PIR" id="S32394">
    <property type="entry name" value="S32394"/>
</dbReference>
<dbReference type="PIR" id="S48158">
    <property type="entry name" value="S48158"/>
</dbReference>
<dbReference type="RefSeq" id="NP_001028780.1">
    <property type="nucleotide sequence ID" value="NM_001033608.1"/>
</dbReference>
<dbReference type="SMR" id="P80177"/>
<dbReference type="FunCoup" id="P80177">
    <property type="interactions" value="630"/>
</dbReference>
<dbReference type="STRING" id="9913.ENSBTAP00000073394"/>
<dbReference type="PaxDb" id="9913-ENSBTAP00000009699"/>
<dbReference type="PeptideAtlas" id="P80177"/>
<dbReference type="Ensembl" id="ENSBTAT00000009699.4">
    <property type="protein sequence ID" value="ENSBTAP00000009699.3"/>
    <property type="gene ID" value="ENSBTAG00000007375.5"/>
</dbReference>
<dbReference type="GeneID" id="280858"/>
<dbReference type="KEGG" id="bta:280858"/>
<dbReference type="CTD" id="4282"/>
<dbReference type="VEuPathDB" id="HostDB:ENSBTAG00000007375"/>
<dbReference type="VGNC" id="VGNC:49557">
    <property type="gene designation" value="MIF"/>
</dbReference>
<dbReference type="eggNOG" id="KOG1759">
    <property type="taxonomic scope" value="Eukaryota"/>
</dbReference>
<dbReference type="GeneTree" id="ENSGT00940000155608"/>
<dbReference type="HOGENOM" id="CLU_129906_1_1_1"/>
<dbReference type="InParanoid" id="P80177"/>
<dbReference type="OMA" id="YINFFDM"/>
<dbReference type="OrthoDB" id="255819at2759"/>
<dbReference type="TreeFam" id="TF313853"/>
<dbReference type="Reactome" id="R-BTA-202733">
    <property type="pathway name" value="Cell surface interactions at the vascular wall"/>
</dbReference>
<dbReference type="Reactome" id="R-BTA-6798695">
    <property type="pathway name" value="Neutrophil degranulation"/>
</dbReference>
<dbReference type="SABIO-RK" id="P80177"/>
<dbReference type="Proteomes" id="UP000009136">
    <property type="component" value="Chromosome 17"/>
</dbReference>
<dbReference type="Bgee" id="ENSBTAG00000007375">
    <property type="expression patterns" value="Expressed in retina and 108 other cell types or tissues"/>
</dbReference>
<dbReference type="GO" id="GO:0005737">
    <property type="term" value="C:cytoplasm"/>
    <property type="evidence" value="ECO:0007669"/>
    <property type="project" value="UniProtKB-SubCell"/>
</dbReference>
<dbReference type="GO" id="GO:0005615">
    <property type="term" value="C:extracellular space"/>
    <property type="evidence" value="ECO:0000318"/>
    <property type="project" value="GO_Central"/>
</dbReference>
<dbReference type="GO" id="GO:0005125">
    <property type="term" value="F:cytokine activity"/>
    <property type="evidence" value="ECO:0000318"/>
    <property type="project" value="GO_Central"/>
</dbReference>
<dbReference type="GO" id="GO:0004167">
    <property type="term" value="F:dopachrome isomerase activity"/>
    <property type="evidence" value="ECO:0000250"/>
    <property type="project" value="UniProtKB"/>
</dbReference>
<dbReference type="GO" id="GO:0050178">
    <property type="term" value="F:phenylpyruvate tautomerase activity"/>
    <property type="evidence" value="ECO:0000318"/>
    <property type="project" value="GO_Central"/>
</dbReference>
<dbReference type="GO" id="GO:0006954">
    <property type="term" value="P:inflammatory response"/>
    <property type="evidence" value="ECO:0007669"/>
    <property type="project" value="UniProtKB-KW"/>
</dbReference>
<dbReference type="GO" id="GO:0045087">
    <property type="term" value="P:innate immune response"/>
    <property type="evidence" value="ECO:0007669"/>
    <property type="project" value="UniProtKB-KW"/>
</dbReference>
<dbReference type="FunFam" id="3.30.429.10:FF:000001">
    <property type="entry name" value="Macrophage migration inhibitory factor"/>
    <property type="match status" value="1"/>
</dbReference>
<dbReference type="Gene3D" id="3.30.429.10">
    <property type="entry name" value="Macrophage Migration Inhibitory Factor"/>
    <property type="match status" value="1"/>
</dbReference>
<dbReference type="InterPro" id="IPR001398">
    <property type="entry name" value="Macrophage_inhib_fac"/>
</dbReference>
<dbReference type="InterPro" id="IPR019829">
    <property type="entry name" value="Macrophage_inhib_fac_CS"/>
</dbReference>
<dbReference type="InterPro" id="IPR014347">
    <property type="entry name" value="Tautomerase/MIF_sf"/>
</dbReference>
<dbReference type="PANTHER" id="PTHR11954">
    <property type="entry name" value="D-DOPACHROME DECARBOXYLASE"/>
    <property type="match status" value="1"/>
</dbReference>
<dbReference type="PANTHER" id="PTHR11954:SF6">
    <property type="entry name" value="MACROPHAGE MIGRATION INHIBITORY FACTOR"/>
    <property type="match status" value="1"/>
</dbReference>
<dbReference type="Pfam" id="PF01187">
    <property type="entry name" value="MIF"/>
    <property type="match status" value="1"/>
</dbReference>
<dbReference type="SUPFAM" id="SSF55331">
    <property type="entry name" value="Tautomerase/MIF"/>
    <property type="match status" value="1"/>
</dbReference>
<dbReference type="PROSITE" id="PS01158">
    <property type="entry name" value="MIF"/>
    <property type="match status" value="1"/>
</dbReference>
<feature type="initiator methionine" description="Removed" evidence="3 4">
    <location>
        <position position="1"/>
    </location>
</feature>
<feature type="chain" id="PRO_0000158061" description="Macrophage migration inhibitory factor">
    <location>
        <begin position="2"/>
        <end position="115"/>
    </location>
</feature>
<feature type="active site" description="Proton acceptor; via imino nitrogen" evidence="2">
    <location>
        <position position="2"/>
    </location>
</feature>
<feature type="binding site" evidence="1">
    <location>
        <position position="33"/>
    </location>
    <ligand>
        <name>substrate</name>
    </ligand>
</feature>
<feature type="binding site" evidence="1">
    <location>
        <position position="65"/>
    </location>
    <ligand>
        <name>substrate</name>
    </ligand>
</feature>
<feature type="binding site" evidence="1">
    <location>
        <position position="98"/>
    </location>
    <ligand>
        <name>substrate</name>
    </ligand>
</feature>
<feature type="modified residue" description="N6-acetyllysine; alternate" evidence="1">
    <location>
        <position position="78"/>
    </location>
</feature>
<feature type="modified residue" description="N6-succinyllysine; alternate" evidence="2">
    <location>
        <position position="78"/>
    </location>
</feature>
<feature type="sequence conflict" description="In Ref. 3; AAD38354." evidence="5" ref="3">
    <original>FC</original>
    <variation>YY</variation>
    <location>
        <begin position="99"/>
        <end position="100"/>
    </location>
</feature>
<comment type="function">
    <text evidence="1">Pro-inflammatory cytokine involved in the innate immune response to bacterial pathogens. The expression of MIF at sites of inflammation suggests a role as mediator in regulating the function of macrophages in host defense. Counteracts the anti-inflammatory activity of glucocorticoids. Has phenylpyruvate tautomerase and dopachrome tautomerase activity (in vitro), but the physiological substrate is not known. It is not clear whether the tautomerase activity has any physiological relevance, and whether it is important for cytokine activity.</text>
</comment>
<comment type="catalytic activity">
    <reaction evidence="1">
        <text>3-phenylpyruvate = enol-phenylpyruvate</text>
        <dbReference type="Rhea" id="RHEA:17097"/>
        <dbReference type="ChEBI" id="CHEBI:16815"/>
        <dbReference type="ChEBI" id="CHEBI:18005"/>
        <dbReference type="EC" id="5.3.2.1"/>
    </reaction>
</comment>
<comment type="catalytic activity">
    <reaction evidence="1">
        <text>L-dopachrome = 5,6-dihydroxyindole-2-carboxylate</text>
        <dbReference type="Rhea" id="RHEA:13041"/>
        <dbReference type="ChEBI" id="CHEBI:16875"/>
        <dbReference type="ChEBI" id="CHEBI:57509"/>
        <dbReference type="EC" id="5.3.3.12"/>
    </reaction>
</comment>
<comment type="subunit">
    <text evidence="1 2">Homotrimer (By similarity). Interacts with CXCR2 extracellular domain (By similarity). Interacts with the CD74 extracellular domain, USO1, COPS5 and BNIPL (By similarity).</text>
</comment>
<comment type="subcellular location">
    <subcellularLocation>
        <location evidence="1">Secreted</location>
    </subcellularLocation>
    <subcellularLocation>
        <location evidence="1">Cytoplasm</location>
    </subcellularLocation>
    <text evidence="1">Does not have a cleavable signal sequence and is secreted via a specialized, non-classical pathway. Secreted by macrophages upon stimulation by bacterial lipopolysaccharide (LPS), or by M.tuberculosis antigens.</text>
</comment>
<comment type="similarity">
    <text evidence="5">Belongs to the MIF family.</text>
</comment>
<gene>
    <name type="primary">MIF</name>
</gene>
<organism>
    <name type="scientific">Bos taurus</name>
    <name type="common">Bovine</name>
    <dbReference type="NCBI Taxonomy" id="9913"/>
    <lineage>
        <taxon>Eukaryota</taxon>
        <taxon>Metazoa</taxon>
        <taxon>Chordata</taxon>
        <taxon>Craniata</taxon>
        <taxon>Vertebrata</taxon>
        <taxon>Euteleostomi</taxon>
        <taxon>Mammalia</taxon>
        <taxon>Eutheria</taxon>
        <taxon>Laurasiatheria</taxon>
        <taxon>Artiodactyla</taxon>
        <taxon>Ruminantia</taxon>
        <taxon>Pecora</taxon>
        <taxon>Bovidae</taxon>
        <taxon>Bovinae</taxon>
        <taxon>Bos</taxon>
    </lineage>
</organism>
<name>MIF_BOVIN</name>
<evidence type="ECO:0000250" key="1">
    <source>
        <dbReference type="UniProtKB" id="P14174"/>
    </source>
</evidence>
<evidence type="ECO:0000250" key="2">
    <source>
        <dbReference type="UniProtKB" id="P34884"/>
    </source>
</evidence>
<evidence type="ECO:0000269" key="3">
    <source>
    </source>
</evidence>
<evidence type="ECO:0000269" key="4">
    <source>
    </source>
</evidence>
<evidence type="ECO:0000305" key="5"/>
<accession>P80177</accession>
<accession>Q3T190</accession>
<accession>Q9XT46</accession>
<sequence length="115" mass="12343">MPMFVVNTNVPRASVPDGLLSELTQQLAQATGKPAQYIAVHVVPDQLMTFGGSSEPCALCSLHSIGKIGGAQNRSYSKLLCGLLTERLRISPDRIYINFCDMNAANVGWNGSTFA</sequence>
<protein>
    <recommendedName>
        <fullName>Macrophage migration inhibitory factor</fullName>
        <shortName>MIF</shortName>
        <ecNumber evidence="1">5.3.2.1</ecNumber>
    </recommendedName>
    <alternativeName>
        <fullName>L-dopachrome isomerase</fullName>
    </alternativeName>
    <alternativeName>
        <fullName>L-dopachrome tautomerase</fullName>
        <ecNumber evidence="1">5.3.3.12</ecNumber>
    </alternativeName>
    <alternativeName>
        <fullName>Phenylpyruvate tautomerase</fullName>
    </alternativeName>
    <alternativeName>
        <fullName>p12A</fullName>
    </alternativeName>
</protein>
<reference key="1">
    <citation type="submission" date="2005-08" db="EMBL/GenBank/DDBJ databases">
        <authorList>
            <consortium name="NIH - Mammalian Gene Collection (MGC) project"/>
        </authorList>
    </citation>
    <scope>NUCLEOTIDE SEQUENCE [LARGE SCALE MRNA]</scope>
    <source>
        <strain>Crossbred X Angus</strain>
        <tissue>Ileum</tissue>
    </source>
</reference>
<reference key="2">
    <citation type="journal article" date="1994" name="Eur. J. Biochem.">
        <title>A diversified family of 12-kDa proteins with a high amino acid sequence similarity to macrophage migration-inhibitory factor (MIF).</title>
        <authorList>
            <person name="Galat A."/>
            <person name="Riviere S."/>
            <person name="Bouet F."/>
            <person name="Menez A."/>
        </authorList>
    </citation>
    <scope>PROTEIN SEQUENCE OF 2-115</scope>
    <source>
        <tissue>Brain</tissue>
    </source>
</reference>
<reference key="3">
    <citation type="journal article" date="2000" name="Biol. Reprod.">
        <title>Macrophage migration inhibitory factor in the bovine corpus luteum: characterization of steady-state messenger ribonucleic acid and immunohistochemical localization.</title>
        <authorList>
            <person name="Bove S.E."/>
            <person name="Petroff M.G."/>
            <person name="Nishibori M."/>
            <person name="Pate J.L."/>
        </authorList>
    </citation>
    <scope>NUCLEOTIDE SEQUENCE [MRNA] OF 20-104</scope>
    <source>
        <tissue>Corpus luteum</tissue>
    </source>
</reference>
<reference key="4">
    <citation type="journal article" date="1993" name="FEBS Lett.">
        <title>Purification of macrophage migration inhibitory factor (MIF) from bovine brain cytosol.</title>
        <authorList>
            <person name="Galat A."/>
            <person name="Riviere S."/>
            <person name="Bouet F."/>
        </authorList>
    </citation>
    <scope>PROTEIN SEQUENCE OF 2-40</scope>
    <source>
        <tissue>Brain</tissue>
    </source>
</reference>